<name>AGTRB_RAT</name>
<proteinExistence type="evidence at transcript level"/>
<dbReference type="EMBL" id="M87003">
    <property type="protein sequence ID" value="AAA40739.1"/>
    <property type="molecule type" value="mRNA"/>
</dbReference>
<dbReference type="EMBL" id="X64052">
    <property type="protein sequence ID" value="CAA45410.1"/>
    <property type="molecule type" value="mRNA"/>
</dbReference>
<dbReference type="EMBL" id="M90065">
    <property type="protein sequence ID" value="AAA40704.1"/>
    <property type="molecule type" value="mRNA"/>
</dbReference>
<dbReference type="EMBL" id="S37461">
    <property type="protein sequence ID" value="AAB22267.1"/>
    <property type="molecule type" value="mRNA"/>
</dbReference>
<dbReference type="PIR" id="A42656">
    <property type="entry name" value="A42656"/>
</dbReference>
<dbReference type="PIR" id="JQ1516">
    <property type="entry name" value="JQ1516"/>
</dbReference>
<dbReference type="RefSeq" id="NP_112271.2">
    <property type="nucleotide sequence ID" value="NM_031009.2"/>
</dbReference>
<dbReference type="RefSeq" id="XP_006232249.1">
    <property type="nucleotide sequence ID" value="XM_006232187.2"/>
</dbReference>
<dbReference type="RefSeq" id="XP_008759101.1">
    <property type="nucleotide sequence ID" value="XM_008760879.2"/>
</dbReference>
<dbReference type="SMR" id="P29089"/>
<dbReference type="FunCoup" id="P29089">
    <property type="interactions" value="68"/>
</dbReference>
<dbReference type="STRING" id="10116.ENSRNOP00000014175"/>
<dbReference type="BindingDB" id="P29089"/>
<dbReference type="ChEMBL" id="CHEMBL263"/>
<dbReference type="DrugCentral" id="P29089"/>
<dbReference type="GuidetoPHARMACOLOGY" id="34"/>
<dbReference type="GlyCosmos" id="P29089">
    <property type="glycosylation" value="3 sites, No reported glycans"/>
</dbReference>
<dbReference type="GlyGen" id="P29089">
    <property type="glycosylation" value="3 sites"/>
</dbReference>
<dbReference type="iPTMnet" id="P29089"/>
<dbReference type="PhosphoSitePlus" id="P29089"/>
<dbReference type="PaxDb" id="10116-ENSRNOP00000014175"/>
<dbReference type="Ensembl" id="ENSRNOT00000014178.5">
    <property type="protein sequence ID" value="ENSRNOP00000014175.3"/>
    <property type="gene ID" value="ENSRNOG00000010640.5"/>
</dbReference>
<dbReference type="GeneID" id="81638"/>
<dbReference type="KEGG" id="rno:81638"/>
<dbReference type="UCSC" id="RGD:2071">
    <property type="organism name" value="rat"/>
</dbReference>
<dbReference type="AGR" id="RGD:2071"/>
<dbReference type="CTD" id="11608"/>
<dbReference type="RGD" id="2071">
    <property type="gene designation" value="Agtr1b"/>
</dbReference>
<dbReference type="eggNOG" id="KOG3656">
    <property type="taxonomic scope" value="Eukaryota"/>
</dbReference>
<dbReference type="GeneTree" id="ENSGT01130000278303"/>
<dbReference type="HOGENOM" id="CLU_009579_8_3_1"/>
<dbReference type="InParanoid" id="P29089"/>
<dbReference type="OMA" id="ITICMAY"/>
<dbReference type="OrthoDB" id="8804420at2759"/>
<dbReference type="PhylomeDB" id="P29089"/>
<dbReference type="TreeFam" id="TF330024"/>
<dbReference type="PRO" id="PR:P29089"/>
<dbReference type="Proteomes" id="UP000002494">
    <property type="component" value="Chromosome 2"/>
</dbReference>
<dbReference type="Bgee" id="ENSRNOG00000010640">
    <property type="expression patterns" value="Expressed in kidney and 7 other cell types or tissues"/>
</dbReference>
<dbReference type="GO" id="GO:0005886">
    <property type="term" value="C:plasma membrane"/>
    <property type="evidence" value="ECO:0000318"/>
    <property type="project" value="GO_Central"/>
</dbReference>
<dbReference type="GO" id="GO:0001596">
    <property type="term" value="F:angiotensin type I receptor activity"/>
    <property type="evidence" value="ECO:0000250"/>
    <property type="project" value="UniProtKB"/>
</dbReference>
<dbReference type="GO" id="GO:0004945">
    <property type="term" value="F:angiotensin type II receptor activity"/>
    <property type="evidence" value="ECO:0007669"/>
    <property type="project" value="InterPro"/>
</dbReference>
<dbReference type="GO" id="GO:0038166">
    <property type="term" value="P:angiotensin-activated signaling pathway"/>
    <property type="evidence" value="ECO:0000315"/>
    <property type="project" value="BHF-UCL"/>
</dbReference>
<dbReference type="GO" id="GO:0001568">
    <property type="term" value="P:blood vessel development"/>
    <property type="evidence" value="ECO:0000266"/>
    <property type="project" value="RGD"/>
</dbReference>
<dbReference type="GO" id="GO:0071549">
    <property type="term" value="P:cellular response to dexamethasone stimulus"/>
    <property type="evidence" value="ECO:0000314"/>
    <property type="project" value="UniProtKB"/>
</dbReference>
<dbReference type="GO" id="GO:0042756">
    <property type="term" value="P:drinking behavior"/>
    <property type="evidence" value="ECO:0000266"/>
    <property type="project" value="RGD"/>
</dbReference>
<dbReference type="GO" id="GO:0007186">
    <property type="term" value="P:G protein-coupled receptor signaling pathway"/>
    <property type="evidence" value="ECO:0000318"/>
    <property type="project" value="GO_Central"/>
</dbReference>
<dbReference type="GO" id="GO:0006954">
    <property type="term" value="P:inflammatory response"/>
    <property type="evidence" value="ECO:0000266"/>
    <property type="project" value="RGD"/>
</dbReference>
<dbReference type="GO" id="GO:0001822">
    <property type="term" value="P:kidney development"/>
    <property type="evidence" value="ECO:0000266"/>
    <property type="project" value="RGD"/>
</dbReference>
<dbReference type="GO" id="GO:0002034">
    <property type="term" value="P:maintenance of blood vessel diameter homeostasis by renin-angiotensin"/>
    <property type="evidence" value="ECO:0000250"/>
    <property type="project" value="UniProtKB"/>
</dbReference>
<dbReference type="GO" id="GO:0051402">
    <property type="term" value="P:neuron apoptotic process"/>
    <property type="evidence" value="ECO:0000266"/>
    <property type="project" value="RGD"/>
</dbReference>
<dbReference type="GO" id="GO:0045777">
    <property type="term" value="P:positive regulation of blood pressure"/>
    <property type="evidence" value="ECO:0000315"/>
    <property type="project" value="BHF-UCL"/>
</dbReference>
<dbReference type="GO" id="GO:0090190">
    <property type="term" value="P:positive regulation of branching involved in ureteric bud morphogenesis"/>
    <property type="evidence" value="ECO:0000315"/>
    <property type="project" value="UniProtKB"/>
</dbReference>
<dbReference type="GO" id="GO:0007204">
    <property type="term" value="P:positive regulation of cytosolic calcium ion concentration"/>
    <property type="evidence" value="ECO:0000318"/>
    <property type="project" value="GO_Central"/>
</dbReference>
<dbReference type="GO" id="GO:0008217">
    <property type="term" value="P:regulation of blood pressure"/>
    <property type="evidence" value="ECO:0000266"/>
    <property type="project" value="RGD"/>
</dbReference>
<dbReference type="GO" id="GO:0002019">
    <property type="term" value="P:regulation of renal output by angiotensin"/>
    <property type="evidence" value="ECO:0000304"/>
    <property type="project" value="RGD"/>
</dbReference>
<dbReference type="GO" id="GO:0001991">
    <property type="term" value="P:regulation of systemic arterial blood pressure by circulatory renin-angiotensin"/>
    <property type="evidence" value="ECO:0000266"/>
    <property type="project" value="RGD"/>
</dbReference>
<dbReference type="GO" id="GO:0019229">
    <property type="term" value="P:regulation of vasoconstriction"/>
    <property type="evidence" value="ECO:0007669"/>
    <property type="project" value="InterPro"/>
</dbReference>
<dbReference type="GO" id="GO:0001999">
    <property type="term" value="P:renal response to blood flow involved in circulatory renin-angiotensin regulation of systemic arterial blood pressure"/>
    <property type="evidence" value="ECO:0000304"/>
    <property type="project" value="RGD"/>
</dbReference>
<dbReference type="GO" id="GO:1990776">
    <property type="term" value="P:response to angiotensin"/>
    <property type="evidence" value="ECO:0000270"/>
    <property type="project" value="RGD"/>
</dbReference>
<dbReference type="GO" id="GO:0043627">
    <property type="term" value="P:response to estrogen"/>
    <property type="evidence" value="ECO:0000314"/>
    <property type="project" value="RGD"/>
</dbReference>
<dbReference type="GO" id="GO:0001666">
    <property type="term" value="P:response to hypoxia"/>
    <property type="evidence" value="ECO:0000270"/>
    <property type="project" value="RGD"/>
</dbReference>
<dbReference type="GO" id="GO:0035902">
    <property type="term" value="P:response to immobilization stress"/>
    <property type="evidence" value="ECO:0000270"/>
    <property type="project" value="RGD"/>
</dbReference>
<dbReference type="GO" id="GO:0035094">
    <property type="term" value="P:response to nicotine"/>
    <property type="evidence" value="ECO:0000270"/>
    <property type="project" value="RGD"/>
</dbReference>
<dbReference type="GO" id="GO:0007584">
    <property type="term" value="P:response to nutrient"/>
    <property type="evidence" value="ECO:0000270"/>
    <property type="project" value="RGD"/>
</dbReference>
<dbReference type="GO" id="GO:0009651">
    <property type="term" value="P:response to salt stress"/>
    <property type="evidence" value="ECO:0000270"/>
    <property type="project" value="RGD"/>
</dbReference>
<dbReference type="GO" id="GO:0009410">
    <property type="term" value="P:response to xenobiotic stimulus"/>
    <property type="evidence" value="ECO:0000270"/>
    <property type="project" value="RGD"/>
</dbReference>
<dbReference type="CDD" id="cd15192">
    <property type="entry name" value="7tmA_AT1R"/>
    <property type="match status" value="1"/>
</dbReference>
<dbReference type="FunFam" id="1.20.1070.10:FF:000088">
    <property type="entry name" value="Angiotensin II receptor type 1"/>
    <property type="match status" value="1"/>
</dbReference>
<dbReference type="Gene3D" id="1.20.1070.10">
    <property type="entry name" value="Rhodopsin 7-helix transmembrane proteins"/>
    <property type="match status" value="1"/>
</dbReference>
<dbReference type="InterPro" id="IPR000190">
    <property type="entry name" value="ATII_AT1_rcpt"/>
</dbReference>
<dbReference type="InterPro" id="IPR000248">
    <property type="entry name" value="ATII_rcpt"/>
</dbReference>
<dbReference type="InterPro" id="IPR050119">
    <property type="entry name" value="CCR1-9-like"/>
</dbReference>
<dbReference type="InterPro" id="IPR000276">
    <property type="entry name" value="GPCR_Rhodpsn"/>
</dbReference>
<dbReference type="InterPro" id="IPR017452">
    <property type="entry name" value="GPCR_Rhodpsn_7TM"/>
</dbReference>
<dbReference type="PANTHER" id="PTHR10489">
    <property type="entry name" value="CELL ADHESION MOLECULE"/>
    <property type="match status" value="1"/>
</dbReference>
<dbReference type="PANTHER" id="PTHR10489:SF956">
    <property type="entry name" value="TYPE-1 ANGIOTENSIN II RECEPTOR A"/>
    <property type="match status" value="1"/>
</dbReference>
<dbReference type="Pfam" id="PF00001">
    <property type="entry name" value="7tm_1"/>
    <property type="match status" value="1"/>
</dbReference>
<dbReference type="PRINTS" id="PR00241">
    <property type="entry name" value="ANGIOTENSINR"/>
</dbReference>
<dbReference type="PRINTS" id="PR00635">
    <property type="entry name" value="ANGIOTENSN1R"/>
</dbReference>
<dbReference type="PRINTS" id="PR00237">
    <property type="entry name" value="GPCRRHODOPSN"/>
</dbReference>
<dbReference type="SMART" id="SM01381">
    <property type="entry name" value="7TM_GPCR_Srsx"/>
    <property type="match status" value="1"/>
</dbReference>
<dbReference type="SUPFAM" id="SSF81321">
    <property type="entry name" value="Family A G protein-coupled receptor-like"/>
    <property type="match status" value="1"/>
</dbReference>
<dbReference type="PROSITE" id="PS00237">
    <property type="entry name" value="G_PROTEIN_RECEP_F1_1"/>
    <property type="match status" value="1"/>
</dbReference>
<dbReference type="PROSITE" id="PS50262">
    <property type="entry name" value="G_PROTEIN_RECEP_F1_2"/>
    <property type="match status" value="1"/>
</dbReference>
<comment type="function">
    <text evidence="2">Receptor for angiotensin II, a vasoconstricting peptide, which acts as a key regulator of blood pressure and sodium retention by the kidney. The activated receptor in turn couples to G-alpha proteins G(q) (GNAQ, GNA11, GNA14 or GNA15) and thus activates phospholipase C and increases the cytosolic Ca(2+) concentrations, which in turn triggers cellular responses such as stimulation of protein kinase C.</text>
</comment>
<comment type="subunit">
    <text evidence="1 2">Interacts with MAS1 (By similarity). Interacts with ARRB1 (By similarity). Interacts with FLNA (via filamin repeat 21); increases PKA-mediated phosphorylation of FLNA (By similarity).</text>
</comment>
<comment type="subcellular location">
    <subcellularLocation>
        <location evidence="2">Cell membrane</location>
        <topology evidence="2">Multi-pass membrane protein</topology>
    </subcellularLocation>
</comment>
<comment type="tissue specificity">
    <text evidence="6">Is expressed in the liver, kidney, aorta, lung, uterus, ovary, spleen, heart, and vascular smooth muscle cell. Expressed most abundantly in the adrenal gland.</text>
</comment>
<comment type="PTM">
    <text evidence="2">C-terminal Ser or Thr residues may be phosphorylated.</text>
</comment>
<comment type="similarity">
    <text evidence="4">Belongs to the G-protein coupled receptor 1 family.</text>
</comment>
<gene>
    <name type="primary">Agtr1b</name>
    <name type="synonym">Agtr1</name>
    <name type="synonym">At1b</name>
</gene>
<accession>P29089</accession>
<evidence type="ECO:0000250" key="1">
    <source>
        <dbReference type="UniProtKB" id="P25095"/>
    </source>
</evidence>
<evidence type="ECO:0000250" key="2">
    <source>
        <dbReference type="UniProtKB" id="P30556"/>
    </source>
</evidence>
<evidence type="ECO:0000255" key="3"/>
<evidence type="ECO:0000255" key="4">
    <source>
        <dbReference type="PROSITE-ProRule" id="PRU00521"/>
    </source>
</evidence>
<evidence type="ECO:0000256" key="5">
    <source>
        <dbReference type="SAM" id="MobiDB-lite"/>
    </source>
</evidence>
<evidence type="ECO:0000269" key="6">
    <source>
    </source>
</evidence>
<evidence type="ECO:0000303" key="7">
    <source>
    </source>
</evidence>
<evidence type="ECO:0000303" key="8">
    <source>
    </source>
</evidence>
<evidence type="ECO:0000305" key="9"/>
<reference key="1">
    <citation type="journal article" date="1992" name="Biochem. Biophys. Res. Commun.">
        <title>Angiotensin II type-1 receptor subtype cDNAs: differential tissue expression and hormonal regulation.</title>
        <authorList>
            <person name="Kakar S.S."/>
            <person name="Sellers J.C."/>
            <person name="Devor D.C."/>
            <person name="Musgrove L.C."/>
            <person name="Neill J.D."/>
        </authorList>
    </citation>
    <scope>NUCLEOTIDE SEQUENCE [MRNA]</scope>
    <source>
        <tissue>Pituitary anterior lobe</tissue>
    </source>
</reference>
<reference key="2">
    <citation type="journal article" date="1992" name="Biochem. Biophys. Res. Commun.">
        <title>Isolation of two distinct type I angiotensin II receptor genes.</title>
        <authorList>
            <person name="Elton T.S."/>
            <person name="Stephan C.C."/>
            <person name="Taylor G.R."/>
            <person name="Kimball M.G."/>
            <person name="Martin M.M."/>
            <person name="Durand J.N."/>
            <person name="Oparil S."/>
        </authorList>
    </citation>
    <scope>NUCLEOTIDE SEQUENCE [MRNA]</scope>
</reference>
<reference key="3">
    <citation type="journal article" date="1992" name="FEBS Lett.">
        <title>Identification of two subtypes in the rat type I angiotensin II receptor.</title>
        <authorList>
            <person name="Iwai N."/>
            <person name="Inagami T."/>
        </authorList>
    </citation>
    <scope>NUCLEOTIDE SEQUENCE [MRNA]</scope>
    <scope>TISSUE SPECIFICITY</scope>
    <source>
        <strain>Sprague-Dawley</strain>
        <tissue>Adrenal gland</tissue>
    </source>
</reference>
<reference key="4">
    <citation type="journal article" date="1992" name="J. Biol. Chem.">
        <title>Cloning and expression of a novel angiotensin II receptor subtype.</title>
        <authorList>
            <person name="Sandberg K."/>
            <person name="Ji H."/>
            <person name="Clark A.J."/>
            <person name="Shapira H."/>
            <person name="Catt K.J."/>
        </authorList>
    </citation>
    <scope>NUCLEOTIDE SEQUENCE [MRNA]</scope>
    <source>
        <tissue>Adrenal cortex</tissue>
    </source>
</reference>
<reference key="5">
    <citation type="journal article" date="1992" name="Biochem. Biophys. Res. Commun.">
        <title>Characterization of an angiotensin type-1 receptor partial cDNA from rat kidney: evidence for a novel AT1B receptor subtype.</title>
        <authorList>
            <person name="Ye M.Q."/>
            <person name="Healy D.P."/>
        </authorList>
    </citation>
    <scope>NUCLEOTIDE SEQUENCE [MRNA] OF 84-259</scope>
    <source>
        <tissue>Kidney</tissue>
    </source>
</reference>
<sequence>MTLNSSTEDGIKRIQDDCPKAGRHNYIFVMIPTLYSIIFVVGIFGNSLVVIVIYFYMKLKTVASVFLLNLALADLCFLLTLPLWAVYTAMEYRWPFGNHLCKIASASVSFNLYASVFLLTCLSIDRYLAIVHPMKSRLRRTMLVAKVTCIIIWLMAGLASLPAVIYRNVYFIENTNITVCAFHYESQNSTLPIGLGLTKNILGFVFPFLIILTSYTLIWKALKKAYKIQKNTPRNDDIFRIIMAIVLFFFFSWVPHQIFTFLDVLIQLGIIRDCEIADIVDTAMPITICIAYFNNCLNPLFYGFLGKKFKKYFLQLLKYIPPTAKSHAGLSTKMSTLSYRPSDNMSSSAKKSASFFEVE</sequence>
<keyword id="KW-1003">Cell membrane</keyword>
<keyword id="KW-1015">Disulfide bond</keyword>
<keyword id="KW-0297">G-protein coupled receptor</keyword>
<keyword id="KW-0325">Glycoprotein</keyword>
<keyword id="KW-0472">Membrane</keyword>
<keyword id="KW-0597">Phosphoprotein</keyword>
<keyword id="KW-0675">Receptor</keyword>
<keyword id="KW-1185">Reference proteome</keyword>
<keyword id="KW-0807">Transducer</keyword>
<keyword id="KW-0812">Transmembrane</keyword>
<keyword id="KW-1133">Transmembrane helix</keyword>
<organism>
    <name type="scientific">Rattus norvegicus</name>
    <name type="common">Rat</name>
    <dbReference type="NCBI Taxonomy" id="10116"/>
    <lineage>
        <taxon>Eukaryota</taxon>
        <taxon>Metazoa</taxon>
        <taxon>Chordata</taxon>
        <taxon>Craniata</taxon>
        <taxon>Vertebrata</taxon>
        <taxon>Euteleostomi</taxon>
        <taxon>Mammalia</taxon>
        <taxon>Eutheria</taxon>
        <taxon>Euarchontoglires</taxon>
        <taxon>Glires</taxon>
        <taxon>Rodentia</taxon>
        <taxon>Myomorpha</taxon>
        <taxon>Muroidea</taxon>
        <taxon>Muridae</taxon>
        <taxon>Murinae</taxon>
        <taxon>Rattus</taxon>
    </lineage>
</organism>
<protein>
    <recommendedName>
        <fullName evidence="8">Type-1 angiotensin II receptor B</fullName>
    </recommendedName>
    <alternativeName>
        <fullName>AT3</fullName>
    </alternativeName>
    <alternativeName>
        <fullName evidence="7">Angiotensin II type-1 receptor B</fullName>
        <shortName>AT1 receptor B</shortName>
    </alternativeName>
</protein>
<feature type="chain" id="PRO_0000069161" description="Type-1 angiotensin II receptor B">
    <location>
        <begin position="1"/>
        <end position="359"/>
    </location>
</feature>
<feature type="topological domain" description="Extracellular" evidence="2">
    <location>
        <begin position="1"/>
        <end position="25"/>
    </location>
</feature>
<feature type="transmembrane region" description="Helical; Name=1" evidence="2">
    <location>
        <begin position="26"/>
        <end position="55"/>
    </location>
</feature>
<feature type="topological domain" description="Cytoplasmic" evidence="2">
    <location>
        <begin position="56"/>
        <end position="61"/>
    </location>
</feature>
<feature type="transmembrane region" description="Helical; Name=2" evidence="2">
    <location>
        <begin position="62"/>
        <end position="89"/>
    </location>
</feature>
<feature type="topological domain" description="Extracellular" evidence="2">
    <location>
        <begin position="90"/>
        <end position="98"/>
    </location>
</feature>
<feature type="transmembrane region" description="Helical; Name=3" evidence="2">
    <location>
        <begin position="99"/>
        <end position="125"/>
    </location>
</feature>
<feature type="topological domain" description="Cytoplasmic" evidence="2">
    <location>
        <begin position="126"/>
        <end position="141"/>
    </location>
</feature>
<feature type="transmembrane region" description="Helical; Name=4" evidence="2">
    <location>
        <begin position="142"/>
        <end position="165"/>
    </location>
</feature>
<feature type="topological domain" description="Extracellular" evidence="2">
    <location>
        <begin position="166"/>
        <end position="190"/>
    </location>
</feature>
<feature type="transmembrane region" description="Helical; Name=5" evidence="2">
    <location>
        <begin position="191"/>
        <end position="216"/>
    </location>
</feature>
<feature type="topological domain" description="Cytoplasmic" evidence="2">
    <location>
        <begin position="217"/>
        <end position="239"/>
    </location>
</feature>
<feature type="transmembrane region" description="Helical; Name=6" evidence="2">
    <location>
        <begin position="240"/>
        <end position="268"/>
    </location>
</feature>
<feature type="topological domain" description="Extracellular" evidence="2">
    <location>
        <begin position="269"/>
        <end position="278"/>
    </location>
</feature>
<feature type="transmembrane region" description="Helical; Name=7" evidence="2">
    <location>
        <begin position="279"/>
        <end position="304"/>
    </location>
</feature>
<feature type="topological domain" description="Cytoplasmic" evidence="2">
    <location>
        <begin position="305"/>
        <end position="359"/>
    </location>
</feature>
<feature type="region of interest" description="Disordered" evidence="5">
    <location>
        <begin position="339"/>
        <end position="359"/>
    </location>
</feature>
<feature type="compositionally biased region" description="Low complexity" evidence="5">
    <location>
        <begin position="346"/>
        <end position="359"/>
    </location>
</feature>
<feature type="binding site" evidence="2">
    <location>
        <position position="15"/>
    </location>
    <ligand>
        <name>angiotensin II</name>
        <dbReference type="ChEBI" id="CHEBI:58506"/>
    </ligand>
</feature>
<feature type="binding site" evidence="2">
    <location>
        <position position="17"/>
    </location>
    <ligand>
        <name>angiotensin II</name>
        <dbReference type="ChEBI" id="CHEBI:58506"/>
    </ligand>
</feature>
<feature type="binding site" evidence="2">
    <location>
        <position position="167"/>
    </location>
    <ligand>
        <name>angiotensin II</name>
        <dbReference type="ChEBI" id="CHEBI:58506"/>
    </ligand>
</feature>
<feature type="binding site" evidence="2">
    <location>
        <position position="182"/>
    </location>
    <ligand>
        <name>angiotensin II</name>
        <dbReference type="ChEBI" id="CHEBI:58506"/>
    </ligand>
</feature>
<feature type="binding site" evidence="2">
    <location>
        <position position="183"/>
    </location>
    <ligand>
        <name>angiotensin II</name>
        <dbReference type="ChEBI" id="CHEBI:58506"/>
    </ligand>
</feature>
<feature type="binding site" evidence="2">
    <location>
        <position position="184"/>
    </location>
    <ligand>
        <name>angiotensin II</name>
        <dbReference type="ChEBI" id="CHEBI:58506"/>
    </ligand>
</feature>
<feature type="binding site" evidence="2">
    <location>
        <position position="199"/>
    </location>
    <ligand>
        <name>angiotensin II</name>
        <dbReference type="ChEBI" id="CHEBI:58506"/>
    </ligand>
</feature>
<feature type="glycosylation site" description="N-linked (GlcNAc...) asparagine" evidence="3">
    <location>
        <position position="4"/>
    </location>
</feature>
<feature type="glycosylation site" description="N-linked (GlcNAc...) asparagine" evidence="3">
    <location>
        <position position="176"/>
    </location>
</feature>
<feature type="glycosylation site" description="N-linked (GlcNAc...) asparagine" evidence="3">
    <location>
        <position position="188"/>
    </location>
</feature>
<feature type="disulfide bond" evidence="2">
    <location>
        <begin position="18"/>
        <end position="274"/>
    </location>
</feature>
<feature type="disulfide bond" evidence="4">
    <location>
        <begin position="101"/>
        <end position="180"/>
    </location>
</feature>
<feature type="sequence conflict" description="In Ref. 1 and 2." evidence="9" ref="1 2">
    <original>T</original>
    <variation>I</variation>
    <location>
        <position position="2"/>
    </location>
</feature>
<feature type="sequence conflict" description="In Ref. 1 and 2." evidence="9" ref="1 2">
    <original>V</original>
    <variation>M</variation>
    <location>
        <position position="40"/>
    </location>
</feature>
<feature type="sequence conflict" description="In Ref. 2." evidence="9" ref="2">
    <original>L</original>
    <variation>Y</variation>
    <location>
        <position position="75"/>
    </location>
</feature>